<organism>
    <name type="scientific">Turnip crinkle virus</name>
    <name type="common">TCV</name>
    <dbReference type="NCBI Taxonomy" id="11988"/>
    <lineage>
        <taxon>Viruses</taxon>
        <taxon>Riboviria</taxon>
        <taxon>Orthornavirae</taxon>
        <taxon>Kitrinoviricota</taxon>
        <taxon>Tolucaviricetes</taxon>
        <taxon>Tolivirales</taxon>
        <taxon>Tombusviridae</taxon>
        <taxon>Procedovirinae</taxon>
        <taxon>Betacarmovirus</taxon>
        <taxon>Betacarmovirus brassicae</taxon>
    </lineage>
</organism>
<organismHost>
    <name type="scientific">Brassica napus subsp. rapifera</name>
    <dbReference type="NCBI Taxonomy" id="3709"/>
</organismHost>
<organismHost>
    <name type="scientific">Hypomyces</name>
    <dbReference type="NCBI Taxonomy" id="5130"/>
</organismHost>
<organismHost>
    <name type="scientific">Moricandia arvensis</name>
    <name type="common">Purple mistress</name>
    <name type="synonym">Brassica arvensis</name>
    <dbReference type="NCBI Taxonomy" id="180540"/>
</organismHost>
<accession>Q7TD19</accession>
<accession>A0A024E2A8</accession>
<gene>
    <name type="ORF">ORF3</name>
</gene>
<reference key="1">
    <citation type="journal article" date="1989" name="Virology">
        <title>The genome structure of turnip crinkle virus.</title>
        <authorList>
            <person name="Carrington J.C."/>
            <person name="Heaton L.A."/>
            <person name="Zuidema D."/>
            <person name="Hillman B.I."/>
            <person name="Morris T.J."/>
        </authorList>
    </citation>
    <scope>NUCLEOTIDE SEQUENCE [GENOMIC RNA]</scope>
</reference>
<reference key="2">
    <citation type="submission" date="2003-06" db="EMBL/GenBank/DDBJ databases">
        <authorList>
            <person name="Ryabov E.V."/>
        </authorList>
    </citation>
    <scope>NUCLEOTIDE SEQUENCE [GENOMIC RNA]</scope>
    <source>
        <strain>Infectious clone UK</strain>
    </source>
</reference>
<reference key="3">
    <citation type="journal article" date="2010" name="J. Virol.">
        <title>Membrane insertion and biogenesis of the Turnip crinkle virus p9 movement protein.</title>
        <authorList>
            <person name="Martinez-Gil L."/>
            <person name="Johnson A.E."/>
            <person name="Mingarro I."/>
        </authorList>
    </citation>
    <scope>TOPOLOGY</scope>
</reference>
<feature type="chain" id="PRO_0000398309" description="Double gene block protein 2">
    <location>
        <begin position="1"/>
        <end position="85"/>
    </location>
</feature>
<feature type="topological domain" description="Lumenal" evidence="1">
    <location>
        <begin position="1"/>
        <end position="2"/>
    </location>
</feature>
<feature type="transmembrane region" description="Helical; Note=Internal signal sequence" evidence="1">
    <location>
        <begin position="3"/>
        <end position="23"/>
    </location>
</feature>
<feature type="topological domain" description="Cytoplasmic" evidence="1">
    <location>
        <begin position="24"/>
        <end position="36"/>
    </location>
</feature>
<feature type="transmembrane region" description="Helical" evidence="1">
    <location>
        <begin position="37"/>
        <end position="56"/>
    </location>
</feature>
<feature type="topological domain" description="Lumenal" evidence="1">
    <location>
        <begin position="57"/>
        <end position="85"/>
    </location>
</feature>
<feature type="sequence variant" description="In strain: Infectious clone UK.">
    <original>V</original>
    <variation>A</variation>
    <location>
        <position position="6"/>
    </location>
</feature>
<feature type="sequence variant" description="In strain: Infectious clone UK.">
    <original>T</original>
    <variation>V</variation>
    <location>
        <position position="29"/>
    </location>
</feature>
<protein>
    <recommendedName>
        <fullName>Double gene block protein 2</fullName>
        <shortName>DGBp2</shortName>
    </recommendedName>
    <alternativeName>
        <fullName>Movement protein P9</fullName>
    </alternativeName>
</protein>
<proteinExistence type="evidence at protein level"/>
<dbReference type="EMBL" id="M22445">
    <property type="protein sequence ID" value="AHZ65050.1"/>
    <property type="molecule type" value="Genomic_RNA"/>
</dbReference>
<dbReference type="EMBL" id="AY312063">
    <property type="protein sequence ID" value="AAP78488.1"/>
    <property type="molecule type" value="Genomic_RNA"/>
</dbReference>
<dbReference type="RefSeq" id="YP_009029987.1">
    <property type="nucleotide sequence ID" value="NC_003821.3"/>
</dbReference>
<dbReference type="KEGG" id="vg:944389"/>
<dbReference type="Proteomes" id="UP000007403">
    <property type="component" value="Genome"/>
</dbReference>
<dbReference type="Proteomes" id="UP000009133">
    <property type="component" value="Genome"/>
</dbReference>
<dbReference type="GO" id="GO:0044167">
    <property type="term" value="C:host cell endoplasmic reticulum membrane"/>
    <property type="evidence" value="ECO:0007669"/>
    <property type="project" value="UniProtKB-SubCell"/>
</dbReference>
<dbReference type="GO" id="GO:0016020">
    <property type="term" value="C:membrane"/>
    <property type="evidence" value="ECO:0007669"/>
    <property type="project" value="UniProtKB-KW"/>
</dbReference>
<dbReference type="GO" id="GO:0046740">
    <property type="term" value="P:transport of virus in host, cell to cell"/>
    <property type="evidence" value="ECO:0007669"/>
    <property type="project" value="UniProtKB-KW"/>
</dbReference>
<sequence length="85" mass="9454">MKVLLVTGVLGLLLLIKWKSQSTSTSNQTCQCPTSPWVIYAFYNSLSLVLLLCHLIPEIKPIHTSYNTHDSSKQQHISINTGNGK</sequence>
<evidence type="ECO:0000255" key="1"/>
<evidence type="ECO:0000305" key="2"/>
<keyword id="KW-1038">Host endoplasmic reticulum</keyword>
<keyword id="KW-1043">Host membrane</keyword>
<keyword id="KW-0472">Membrane</keyword>
<keyword id="KW-1185">Reference proteome</keyword>
<keyword id="KW-0812">Transmembrane</keyword>
<keyword id="KW-1133">Transmembrane helix</keyword>
<keyword id="KW-0813">Transport</keyword>
<keyword id="KW-0916">Viral movement protein</keyword>
<name>MP2_TCV</name>
<comment type="function">
    <text evidence="2">Cell-to-cell movement function.</text>
</comment>
<comment type="subcellular location">
    <subcellularLocation>
        <location>Host endoplasmic reticulum membrane</location>
        <topology>Multi-pass membrane protein</topology>
    </subcellularLocation>
</comment>
<comment type="similarity">
    <text evidence="2">Belongs to the carmovirus double gene block protein 2 family.</text>
</comment>